<comment type="function">
    <text evidence="1">Specifically methylates the pseudouridine at position 1915 (m3Psi1915) in 23S rRNA.</text>
</comment>
<comment type="catalytic activity">
    <reaction evidence="1">
        <text>pseudouridine(1915) in 23S rRNA + S-adenosyl-L-methionine = N(3)-methylpseudouridine(1915) in 23S rRNA + S-adenosyl-L-homocysteine + H(+)</text>
        <dbReference type="Rhea" id="RHEA:42752"/>
        <dbReference type="Rhea" id="RHEA-COMP:10221"/>
        <dbReference type="Rhea" id="RHEA-COMP:10222"/>
        <dbReference type="ChEBI" id="CHEBI:15378"/>
        <dbReference type="ChEBI" id="CHEBI:57856"/>
        <dbReference type="ChEBI" id="CHEBI:59789"/>
        <dbReference type="ChEBI" id="CHEBI:65314"/>
        <dbReference type="ChEBI" id="CHEBI:74486"/>
        <dbReference type="EC" id="2.1.1.177"/>
    </reaction>
</comment>
<comment type="subunit">
    <text evidence="1">Homodimer.</text>
</comment>
<comment type="subcellular location">
    <subcellularLocation>
        <location evidence="1">Cytoplasm</location>
    </subcellularLocation>
</comment>
<comment type="similarity">
    <text evidence="1">Belongs to the RNA methyltransferase RlmH family.</text>
</comment>
<accession>Q5HX40</accession>
<reference key="1">
    <citation type="journal article" date="2005" name="PLoS Biol.">
        <title>Major structural differences and novel potential virulence mechanisms from the genomes of multiple Campylobacter species.</title>
        <authorList>
            <person name="Fouts D.E."/>
            <person name="Mongodin E.F."/>
            <person name="Mandrell R.E."/>
            <person name="Miller W.G."/>
            <person name="Rasko D.A."/>
            <person name="Ravel J."/>
            <person name="Brinkac L.M."/>
            <person name="DeBoy R.T."/>
            <person name="Parker C.T."/>
            <person name="Daugherty S.C."/>
            <person name="Dodson R.J."/>
            <person name="Durkin A.S."/>
            <person name="Madupu R."/>
            <person name="Sullivan S.A."/>
            <person name="Shetty J.U."/>
            <person name="Ayodeji M.A."/>
            <person name="Shvartsbeyn A."/>
            <person name="Schatz M.C."/>
            <person name="Badger J.H."/>
            <person name="Fraser C.M."/>
            <person name="Nelson K.E."/>
        </authorList>
    </citation>
    <scope>NUCLEOTIDE SEQUENCE [LARGE SCALE GENOMIC DNA]</scope>
    <source>
        <strain>RM1221</strain>
    </source>
</reference>
<sequence length="153" mass="17866">MENNLQVNIFCIQKSDEFKTWSEKYSKLISKYATLKEINVFNKKIALAQNLNAIEAKKSYEEAFMPYKKGYCIALDEKGKDLTSIEFAKLIQDKNELSFFIGGAYGLREEFNQSLDFRLSLSKLTLAHQFVKTLLLEQIYRAFCINNNHPYHK</sequence>
<evidence type="ECO:0000255" key="1">
    <source>
        <dbReference type="HAMAP-Rule" id="MF_00658"/>
    </source>
</evidence>
<protein>
    <recommendedName>
        <fullName evidence="1">Ribosomal RNA large subunit methyltransferase H</fullName>
        <ecNumber evidence="1">2.1.1.177</ecNumber>
    </recommendedName>
    <alternativeName>
        <fullName evidence="1">23S rRNA (pseudouridine1915-N3)-methyltransferase</fullName>
    </alternativeName>
    <alternativeName>
        <fullName evidence="1">23S rRNA m3Psi1915 methyltransferase</fullName>
    </alternativeName>
    <alternativeName>
        <fullName evidence="1">rRNA (pseudouridine-N3-)-methyltransferase RlmH</fullName>
    </alternativeName>
</protein>
<proteinExistence type="inferred from homology"/>
<dbReference type="EC" id="2.1.1.177" evidence="1"/>
<dbReference type="EMBL" id="CP000025">
    <property type="protein sequence ID" value="AAW34716.1"/>
    <property type="molecule type" value="Genomic_DNA"/>
</dbReference>
<dbReference type="SMR" id="Q5HX40"/>
<dbReference type="KEGG" id="cjr:CJE0121"/>
<dbReference type="HOGENOM" id="CLU_100552_2_1_7"/>
<dbReference type="GO" id="GO:0005737">
    <property type="term" value="C:cytoplasm"/>
    <property type="evidence" value="ECO:0007669"/>
    <property type="project" value="UniProtKB-SubCell"/>
</dbReference>
<dbReference type="GO" id="GO:0070038">
    <property type="term" value="F:rRNA (pseudouridine-N3-)-methyltransferase activity"/>
    <property type="evidence" value="ECO:0007669"/>
    <property type="project" value="UniProtKB-UniRule"/>
</dbReference>
<dbReference type="CDD" id="cd18081">
    <property type="entry name" value="RlmH-like"/>
    <property type="match status" value="1"/>
</dbReference>
<dbReference type="Gene3D" id="3.40.1280.10">
    <property type="match status" value="1"/>
</dbReference>
<dbReference type="HAMAP" id="MF_00658">
    <property type="entry name" value="23SrRNA_methyltr_H"/>
    <property type="match status" value="1"/>
</dbReference>
<dbReference type="InterPro" id="IPR029028">
    <property type="entry name" value="Alpha/beta_knot_MTases"/>
</dbReference>
<dbReference type="InterPro" id="IPR003742">
    <property type="entry name" value="RlmH-like"/>
</dbReference>
<dbReference type="InterPro" id="IPR029026">
    <property type="entry name" value="tRNA_m1G_MTases_N"/>
</dbReference>
<dbReference type="PANTHER" id="PTHR33603">
    <property type="entry name" value="METHYLTRANSFERASE"/>
    <property type="match status" value="1"/>
</dbReference>
<dbReference type="PANTHER" id="PTHR33603:SF1">
    <property type="entry name" value="RIBOSOMAL RNA LARGE SUBUNIT METHYLTRANSFERASE H"/>
    <property type="match status" value="1"/>
</dbReference>
<dbReference type="Pfam" id="PF02590">
    <property type="entry name" value="SPOUT_MTase"/>
    <property type="match status" value="1"/>
</dbReference>
<dbReference type="PIRSF" id="PIRSF004505">
    <property type="entry name" value="MT_bac"/>
    <property type="match status" value="1"/>
</dbReference>
<dbReference type="SUPFAM" id="SSF75217">
    <property type="entry name" value="alpha/beta knot"/>
    <property type="match status" value="1"/>
</dbReference>
<feature type="chain" id="PRO_0000198105" description="Ribosomal RNA large subunit methyltransferase H">
    <location>
        <begin position="1"/>
        <end position="153"/>
    </location>
</feature>
<feature type="binding site" evidence="1">
    <location>
        <position position="75"/>
    </location>
    <ligand>
        <name>S-adenosyl-L-methionine</name>
        <dbReference type="ChEBI" id="CHEBI:59789"/>
    </ligand>
</feature>
<feature type="binding site" evidence="1">
    <location>
        <position position="102"/>
    </location>
    <ligand>
        <name>S-adenosyl-L-methionine</name>
        <dbReference type="ChEBI" id="CHEBI:59789"/>
    </ligand>
</feature>
<feature type="binding site" evidence="1">
    <location>
        <begin position="121"/>
        <end position="126"/>
    </location>
    <ligand>
        <name>S-adenosyl-L-methionine</name>
        <dbReference type="ChEBI" id="CHEBI:59789"/>
    </ligand>
</feature>
<keyword id="KW-0963">Cytoplasm</keyword>
<keyword id="KW-0489">Methyltransferase</keyword>
<keyword id="KW-0698">rRNA processing</keyword>
<keyword id="KW-0949">S-adenosyl-L-methionine</keyword>
<keyword id="KW-0808">Transferase</keyword>
<name>RLMH_CAMJR</name>
<gene>
    <name evidence="1" type="primary">rlmH</name>
    <name type="ordered locus">CJE0121</name>
</gene>
<organism>
    <name type="scientific">Campylobacter jejuni (strain RM1221)</name>
    <dbReference type="NCBI Taxonomy" id="195099"/>
    <lineage>
        <taxon>Bacteria</taxon>
        <taxon>Pseudomonadati</taxon>
        <taxon>Campylobacterota</taxon>
        <taxon>Epsilonproteobacteria</taxon>
        <taxon>Campylobacterales</taxon>
        <taxon>Campylobacteraceae</taxon>
        <taxon>Campylobacter</taxon>
    </lineage>
</organism>